<keyword id="KW-0997">Cell inner membrane</keyword>
<keyword id="KW-1003">Cell membrane</keyword>
<keyword id="KW-0472">Membrane</keyword>
<keyword id="KW-0520">NAD</keyword>
<keyword id="KW-0874">Quinone</keyword>
<keyword id="KW-1185">Reference proteome</keyword>
<keyword id="KW-1278">Translocase</keyword>
<keyword id="KW-0812">Transmembrane</keyword>
<keyword id="KW-1133">Transmembrane helix</keyword>
<keyword id="KW-0813">Transport</keyword>
<keyword id="KW-0830">Ubiquinone</keyword>
<feature type="chain" id="PRO_0000249452" description="NADH-quinone oxidoreductase subunit N">
    <location>
        <begin position="1"/>
        <end position="485"/>
    </location>
</feature>
<feature type="transmembrane region" description="Helical" evidence="1">
    <location>
        <begin position="8"/>
        <end position="28"/>
    </location>
</feature>
<feature type="transmembrane region" description="Helical" evidence="1">
    <location>
        <begin position="35"/>
        <end position="55"/>
    </location>
</feature>
<feature type="transmembrane region" description="Helical" evidence="1">
    <location>
        <begin position="71"/>
        <end position="91"/>
    </location>
</feature>
<feature type="transmembrane region" description="Helical" evidence="1">
    <location>
        <begin position="105"/>
        <end position="125"/>
    </location>
</feature>
<feature type="transmembrane region" description="Helical" evidence="1">
    <location>
        <begin position="127"/>
        <end position="147"/>
    </location>
</feature>
<feature type="transmembrane region" description="Helical" evidence="1">
    <location>
        <begin position="159"/>
        <end position="179"/>
    </location>
</feature>
<feature type="transmembrane region" description="Helical" evidence="1">
    <location>
        <begin position="203"/>
        <end position="223"/>
    </location>
</feature>
<feature type="transmembrane region" description="Helical" evidence="1">
    <location>
        <begin position="235"/>
        <end position="255"/>
    </location>
</feature>
<feature type="transmembrane region" description="Helical" evidence="1">
    <location>
        <begin position="271"/>
        <end position="291"/>
    </location>
</feature>
<feature type="transmembrane region" description="Helical" evidence="1">
    <location>
        <begin position="297"/>
        <end position="317"/>
    </location>
</feature>
<feature type="transmembrane region" description="Helical" evidence="1">
    <location>
        <begin position="326"/>
        <end position="346"/>
    </location>
</feature>
<feature type="transmembrane region" description="Helical" evidence="1">
    <location>
        <begin position="373"/>
        <end position="393"/>
    </location>
</feature>
<feature type="transmembrane region" description="Helical" evidence="1">
    <location>
        <begin position="408"/>
        <end position="430"/>
    </location>
</feature>
<feature type="transmembrane region" description="Helical" evidence="1">
    <location>
        <begin position="455"/>
        <end position="475"/>
    </location>
</feature>
<name>NUON_SHISS</name>
<accession>Q3YZT4</accession>
<sequence length="485" mass="52066">MTITPQNLIALLPLLIVGLTVVVVMLSIAWRRNHFLNATLSVIGLNAALVSLWFVGQAGAMDVTPLMRVDGFAMLYTGLVLLASLATCTFAYPWLEGYNDNKDEFYLLVLIAALGGILLANANHLASLFLGIELISLPLFGLVGYAFRQKRSLEASIKYTILSAAASSFLLFGMALVYAQSGDLSFVALGKNLGDGMLNEPLLLAGFGLMIVGLGFKLSLVPFHLWTPDVYQGAPAPVSTFLATASKIAIFGVVMRLFLYAPMGDSEAIRVVLAIIAFASIIFGNLMALSQTNIKRLLGYSSISHLGYLLVALIALQTGEMSMEAVGVYLAGYLFSSLGAFGVVSLMSSPYRGPDADSLYSYRGLFWHRPILAAVMTVMMLSLAGIPMTLGFIGKFYVLAVGVQAHLWWLVGAVVVGSASGLYYYLRVAVSLYLHAPEQPGRDAPSNWQYSAGGIVVLISALLVLVLGVWPQPLISIVRLAMPLM</sequence>
<protein>
    <recommendedName>
        <fullName evidence="1">NADH-quinone oxidoreductase subunit N</fullName>
        <ecNumber evidence="1">7.1.1.-</ecNumber>
    </recommendedName>
    <alternativeName>
        <fullName evidence="1">NADH dehydrogenase I subunit N</fullName>
    </alternativeName>
    <alternativeName>
        <fullName evidence="1">NDH-1 subunit N</fullName>
    </alternativeName>
</protein>
<proteinExistence type="inferred from homology"/>
<gene>
    <name evidence="1" type="primary">nuoN</name>
    <name type="ordered locus">SSON_2333</name>
</gene>
<comment type="function">
    <text evidence="1">NDH-1 shuttles electrons from NADH, via FMN and iron-sulfur (Fe-S) centers, to quinones in the respiratory chain. The immediate electron acceptor for the enzyme in this species is believed to be ubiquinone. Couples the redox reaction to proton translocation (for every two electrons transferred, four hydrogen ions are translocated across the cytoplasmic membrane), and thus conserves the redox energy in a proton gradient.</text>
</comment>
<comment type="catalytic activity">
    <reaction evidence="1">
        <text>a quinone + NADH + 5 H(+)(in) = a quinol + NAD(+) + 4 H(+)(out)</text>
        <dbReference type="Rhea" id="RHEA:57888"/>
        <dbReference type="ChEBI" id="CHEBI:15378"/>
        <dbReference type="ChEBI" id="CHEBI:24646"/>
        <dbReference type="ChEBI" id="CHEBI:57540"/>
        <dbReference type="ChEBI" id="CHEBI:57945"/>
        <dbReference type="ChEBI" id="CHEBI:132124"/>
    </reaction>
</comment>
<comment type="subunit">
    <text evidence="1">NDH-1 is composed of 13 different subunits. Subunits NuoA, H, J, K, L, M, N constitute the membrane sector of the complex.</text>
</comment>
<comment type="subcellular location">
    <subcellularLocation>
        <location evidence="1">Cell inner membrane</location>
        <topology evidence="1">Multi-pass membrane protein</topology>
    </subcellularLocation>
</comment>
<comment type="similarity">
    <text evidence="1">Belongs to the complex I subunit 2 family.</text>
</comment>
<comment type="sequence caution" evidence="2">
    <conflict type="erroneous initiation">
        <sequence resource="EMBL-CDS" id="AAZ88978"/>
    </conflict>
</comment>
<dbReference type="EC" id="7.1.1.-" evidence="1"/>
<dbReference type="EMBL" id="CP000038">
    <property type="protein sequence ID" value="AAZ88978.1"/>
    <property type="status" value="ALT_INIT"/>
    <property type="molecule type" value="Genomic_DNA"/>
</dbReference>
<dbReference type="RefSeq" id="WP_000156691.1">
    <property type="nucleotide sequence ID" value="NC_007384.1"/>
</dbReference>
<dbReference type="SMR" id="Q3YZT4"/>
<dbReference type="GeneID" id="93774898"/>
<dbReference type="KEGG" id="ssn:SSON_2333"/>
<dbReference type="HOGENOM" id="CLU_007100_1_5_6"/>
<dbReference type="Proteomes" id="UP000002529">
    <property type="component" value="Chromosome"/>
</dbReference>
<dbReference type="GO" id="GO:0005886">
    <property type="term" value="C:plasma membrane"/>
    <property type="evidence" value="ECO:0007669"/>
    <property type="project" value="UniProtKB-SubCell"/>
</dbReference>
<dbReference type="GO" id="GO:0008137">
    <property type="term" value="F:NADH dehydrogenase (ubiquinone) activity"/>
    <property type="evidence" value="ECO:0007669"/>
    <property type="project" value="InterPro"/>
</dbReference>
<dbReference type="GO" id="GO:0050136">
    <property type="term" value="F:NADH:ubiquinone reductase (non-electrogenic) activity"/>
    <property type="evidence" value="ECO:0007669"/>
    <property type="project" value="UniProtKB-UniRule"/>
</dbReference>
<dbReference type="GO" id="GO:0048038">
    <property type="term" value="F:quinone binding"/>
    <property type="evidence" value="ECO:0007669"/>
    <property type="project" value="UniProtKB-KW"/>
</dbReference>
<dbReference type="GO" id="GO:0042773">
    <property type="term" value="P:ATP synthesis coupled electron transport"/>
    <property type="evidence" value="ECO:0007669"/>
    <property type="project" value="InterPro"/>
</dbReference>
<dbReference type="HAMAP" id="MF_00445">
    <property type="entry name" value="NDH1_NuoN_1"/>
    <property type="match status" value="1"/>
</dbReference>
<dbReference type="InterPro" id="IPR010096">
    <property type="entry name" value="NADH-Q_OxRdtase_suN/2"/>
</dbReference>
<dbReference type="InterPro" id="IPR001750">
    <property type="entry name" value="ND/Mrp_TM"/>
</dbReference>
<dbReference type="NCBIfam" id="TIGR01770">
    <property type="entry name" value="NDH_I_N"/>
    <property type="match status" value="1"/>
</dbReference>
<dbReference type="NCBIfam" id="NF004439">
    <property type="entry name" value="PRK05777.1-1"/>
    <property type="match status" value="1"/>
</dbReference>
<dbReference type="PANTHER" id="PTHR22773">
    <property type="entry name" value="NADH DEHYDROGENASE"/>
    <property type="match status" value="1"/>
</dbReference>
<dbReference type="Pfam" id="PF00361">
    <property type="entry name" value="Proton_antipo_M"/>
    <property type="match status" value="1"/>
</dbReference>
<organism>
    <name type="scientific">Shigella sonnei (strain Ss046)</name>
    <dbReference type="NCBI Taxonomy" id="300269"/>
    <lineage>
        <taxon>Bacteria</taxon>
        <taxon>Pseudomonadati</taxon>
        <taxon>Pseudomonadota</taxon>
        <taxon>Gammaproteobacteria</taxon>
        <taxon>Enterobacterales</taxon>
        <taxon>Enterobacteriaceae</taxon>
        <taxon>Shigella</taxon>
    </lineage>
</organism>
<reference key="1">
    <citation type="journal article" date="2005" name="Nucleic Acids Res.">
        <title>Genome dynamics and diversity of Shigella species, the etiologic agents of bacillary dysentery.</title>
        <authorList>
            <person name="Yang F."/>
            <person name="Yang J."/>
            <person name="Zhang X."/>
            <person name="Chen L."/>
            <person name="Jiang Y."/>
            <person name="Yan Y."/>
            <person name="Tang X."/>
            <person name="Wang J."/>
            <person name="Xiong Z."/>
            <person name="Dong J."/>
            <person name="Xue Y."/>
            <person name="Zhu Y."/>
            <person name="Xu X."/>
            <person name="Sun L."/>
            <person name="Chen S."/>
            <person name="Nie H."/>
            <person name="Peng J."/>
            <person name="Xu J."/>
            <person name="Wang Y."/>
            <person name="Yuan Z."/>
            <person name="Wen Y."/>
            <person name="Yao Z."/>
            <person name="Shen Y."/>
            <person name="Qiang B."/>
            <person name="Hou Y."/>
            <person name="Yu J."/>
            <person name="Jin Q."/>
        </authorList>
    </citation>
    <scope>NUCLEOTIDE SEQUENCE [LARGE SCALE GENOMIC DNA]</scope>
    <source>
        <strain>Ss046</strain>
    </source>
</reference>
<evidence type="ECO:0000255" key="1">
    <source>
        <dbReference type="HAMAP-Rule" id="MF_00445"/>
    </source>
</evidence>
<evidence type="ECO:0000305" key="2"/>